<reference key="1">
    <citation type="journal article" date="2004" name="Nature">
        <title>Genome evolution in yeasts.</title>
        <authorList>
            <person name="Dujon B."/>
            <person name="Sherman D."/>
            <person name="Fischer G."/>
            <person name="Durrens P."/>
            <person name="Casaregola S."/>
            <person name="Lafontaine I."/>
            <person name="de Montigny J."/>
            <person name="Marck C."/>
            <person name="Neuveglise C."/>
            <person name="Talla E."/>
            <person name="Goffard N."/>
            <person name="Frangeul L."/>
            <person name="Aigle M."/>
            <person name="Anthouard V."/>
            <person name="Babour A."/>
            <person name="Barbe V."/>
            <person name="Barnay S."/>
            <person name="Blanchin S."/>
            <person name="Beckerich J.-M."/>
            <person name="Beyne E."/>
            <person name="Bleykasten C."/>
            <person name="Boisrame A."/>
            <person name="Boyer J."/>
            <person name="Cattolico L."/>
            <person name="Confanioleri F."/>
            <person name="de Daruvar A."/>
            <person name="Despons L."/>
            <person name="Fabre E."/>
            <person name="Fairhead C."/>
            <person name="Ferry-Dumazet H."/>
            <person name="Groppi A."/>
            <person name="Hantraye F."/>
            <person name="Hennequin C."/>
            <person name="Jauniaux N."/>
            <person name="Joyet P."/>
            <person name="Kachouri R."/>
            <person name="Kerrest A."/>
            <person name="Koszul R."/>
            <person name="Lemaire M."/>
            <person name="Lesur I."/>
            <person name="Ma L."/>
            <person name="Muller H."/>
            <person name="Nicaud J.-M."/>
            <person name="Nikolski M."/>
            <person name="Oztas S."/>
            <person name="Ozier-Kalogeropoulos O."/>
            <person name="Pellenz S."/>
            <person name="Potier S."/>
            <person name="Richard G.-F."/>
            <person name="Straub M.-L."/>
            <person name="Suleau A."/>
            <person name="Swennen D."/>
            <person name="Tekaia F."/>
            <person name="Wesolowski-Louvel M."/>
            <person name="Westhof E."/>
            <person name="Wirth B."/>
            <person name="Zeniou-Meyer M."/>
            <person name="Zivanovic Y."/>
            <person name="Bolotin-Fukuhara M."/>
            <person name="Thierry A."/>
            <person name="Bouchier C."/>
            <person name="Caudron B."/>
            <person name="Scarpelli C."/>
            <person name="Gaillardin C."/>
            <person name="Weissenbach J."/>
            <person name="Wincker P."/>
            <person name="Souciet J.-L."/>
        </authorList>
    </citation>
    <scope>NUCLEOTIDE SEQUENCE [LARGE SCALE GENOMIC DNA]</scope>
    <source>
        <strain>ATCC 2001 / BCRC 20586 / JCM 3761 / NBRC 0622 / NRRL Y-65 / CBS 138</strain>
    </source>
</reference>
<keyword id="KW-0235">DNA replication</keyword>
<keyword id="KW-0539">Nucleus</keyword>
<keyword id="KW-1185">Reference proteome</keyword>
<name>PSF1_CANGA</name>
<organism>
    <name type="scientific">Candida glabrata (strain ATCC 2001 / BCRC 20586 / JCM 3761 / NBRC 0622 / NRRL Y-65 / CBS 138)</name>
    <name type="common">Yeast</name>
    <name type="synonym">Nakaseomyces glabratus</name>
    <dbReference type="NCBI Taxonomy" id="284593"/>
    <lineage>
        <taxon>Eukaryota</taxon>
        <taxon>Fungi</taxon>
        <taxon>Dikarya</taxon>
        <taxon>Ascomycota</taxon>
        <taxon>Saccharomycotina</taxon>
        <taxon>Saccharomycetes</taxon>
        <taxon>Saccharomycetales</taxon>
        <taxon>Saccharomycetaceae</taxon>
        <taxon>Nakaseomyces</taxon>
    </lineage>
</organism>
<evidence type="ECO:0000250" key="1"/>
<evidence type="ECO:0000305" key="2"/>
<protein>
    <recommendedName>
        <fullName>DNA replication complex GINS protein PSF1</fullName>
    </recommendedName>
</protein>
<comment type="function">
    <text evidence="1">The GINS complex plays an essential role in the initiation of DNA replication.</text>
</comment>
<comment type="subunit">
    <text evidence="1">Component of the GINS complex which is a heterotetramer of SLD5, PSF1, PSF2 and PSF3.</text>
</comment>
<comment type="subcellular location">
    <subcellularLocation>
        <location evidence="1">Nucleus</location>
    </subcellularLocation>
</comment>
<comment type="similarity">
    <text evidence="2">Belongs to the GINS1/PSF1 family.</text>
</comment>
<accession>Q6FVY5</accession>
<feature type="chain" id="PRO_0000278396" description="DNA replication complex GINS protein PSF1">
    <location>
        <begin position="1"/>
        <end position="222"/>
    </location>
</feature>
<sequence length="222" mass="25662">MYGDLANKLILEAKRTQQLNQRRVNEDLQSGGGVNLLSRLPIYHDELVRNILNEVDQLRRNAEFLRNNGNAEEFAHLDEKIVKCQYFVTLLCMERNKRCLLAYQKLRTDILDNIAWCNNGTGIELYSGSNEDETNSLSHYEQEYLKEYGELITELKSESMADIDLSGSLEPPSDVFIDVRVLKDAGEIQTEYGVFNLIKDSQFFVRQSDVERLIQQGYLQKI</sequence>
<dbReference type="EMBL" id="CR380950">
    <property type="protein sequence ID" value="CAG58520.1"/>
    <property type="molecule type" value="Genomic_DNA"/>
</dbReference>
<dbReference type="RefSeq" id="XP_445609.1">
    <property type="nucleotide sequence ID" value="XM_445609.1"/>
</dbReference>
<dbReference type="SMR" id="Q6FVY5"/>
<dbReference type="FunCoup" id="Q6FVY5">
    <property type="interactions" value="478"/>
</dbReference>
<dbReference type="STRING" id="284593.Q6FVY5"/>
<dbReference type="EnsemblFungi" id="CAGL0D04466g-T">
    <property type="protein sequence ID" value="CAGL0D04466g-T-p1"/>
    <property type="gene ID" value="CAGL0D04466g"/>
</dbReference>
<dbReference type="KEGG" id="cgr:2887234"/>
<dbReference type="CGD" id="CAL0128289">
    <property type="gene designation" value="CAGL0D04466g"/>
</dbReference>
<dbReference type="VEuPathDB" id="FungiDB:CAGL0D04466g"/>
<dbReference type="eggNOG" id="KOG3303">
    <property type="taxonomic scope" value="Eukaryota"/>
</dbReference>
<dbReference type="HOGENOM" id="CLU_079191_0_0_1"/>
<dbReference type="InParanoid" id="Q6FVY5"/>
<dbReference type="OMA" id="EAHRSQQ"/>
<dbReference type="Proteomes" id="UP000002428">
    <property type="component" value="Chromosome D"/>
</dbReference>
<dbReference type="GO" id="GO:0071162">
    <property type="term" value="C:CMG complex"/>
    <property type="evidence" value="ECO:0007669"/>
    <property type="project" value="EnsemblFungi"/>
</dbReference>
<dbReference type="GO" id="GO:0000811">
    <property type="term" value="C:GINS complex"/>
    <property type="evidence" value="ECO:0007669"/>
    <property type="project" value="EnsemblFungi"/>
</dbReference>
<dbReference type="GO" id="GO:0043596">
    <property type="term" value="C:nuclear replication fork"/>
    <property type="evidence" value="ECO:0007669"/>
    <property type="project" value="EnsemblFungi"/>
</dbReference>
<dbReference type="GO" id="GO:1902983">
    <property type="term" value="P:DNA strand elongation involved in mitotic DNA replication"/>
    <property type="evidence" value="ECO:0007669"/>
    <property type="project" value="EnsemblFungi"/>
</dbReference>
<dbReference type="GO" id="GO:0000727">
    <property type="term" value="P:double-strand break repair via break-induced replication"/>
    <property type="evidence" value="ECO:0007669"/>
    <property type="project" value="EnsemblFungi"/>
</dbReference>
<dbReference type="GO" id="GO:1902975">
    <property type="term" value="P:mitotic DNA replication initiation"/>
    <property type="evidence" value="ECO:0007669"/>
    <property type="project" value="EnsemblFungi"/>
</dbReference>
<dbReference type="CDD" id="cd11710">
    <property type="entry name" value="GINS_A_psf1"/>
    <property type="match status" value="1"/>
</dbReference>
<dbReference type="CDD" id="cd21696">
    <property type="entry name" value="GINS_B_Psf1"/>
    <property type="match status" value="1"/>
</dbReference>
<dbReference type="Gene3D" id="1.20.58.1030">
    <property type="match status" value="1"/>
</dbReference>
<dbReference type="InterPro" id="IPR021151">
    <property type="entry name" value="GINS_A"/>
</dbReference>
<dbReference type="InterPro" id="IPR036224">
    <property type="entry name" value="GINS_bundle-like_dom_sf"/>
</dbReference>
<dbReference type="InterPro" id="IPR005339">
    <property type="entry name" value="GINS_Psf1"/>
</dbReference>
<dbReference type="InterPro" id="IPR056783">
    <property type="entry name" value="PSF1_C"/>
</dbReference>
<dbReference type="PANTHER" id="PTHR12914:SF2">
    <property type="entry name" value="DNA REPLICATION COMPLEX GINS PROTEIN PSF1"/>
    <property type="match status" value="1"/>
</dbReference>
<dbReference type="PANTHER" id="PTHR12914">
    <property type="entry name" value="PARTNER OF SLD5"/>
    <property type="match status" value="1"/>
</dbReference>
<dbReference type="Pfam" id="PF24997">
    <property type="entry name" value="PSF1_C"/>
    <property type="match status" value="1"/>
</dbReference>
<dbReference type="Pfam" id="PF05916">
    <property type="entry name" value="Sld5"/>
    <property type="match status" value="1"/>
</dbReference>
<dbReference type="SUPFAM" id="SSF158573">
    <property type="entry name" value="GINS helical bundle-like"/>
    <property type="match status" value="1"/>
</dbReference>
<proteinExistence type="inferred from homology"/>
<gene>
    <name type="primary">PSF1</name>
    <name type="ordered locus">CAGL0D04466g</name>
</gene>